<keyword id="KW-0143">Chaperone</keyword>
<keyword id="KW-1015">Disulfide bond</keyword>
<keyword id="KW-0472">Membrane</keyword>
<keyword id="KW-0479">Metal-binding</keyword>
<keyword id="KW-0496">Mitochondrion</keyword>
<keyword id="KW-0999">Mitochondrion inner membrane</keyword>
<keyword id="KW-0653">Protein transport</keyword>
<keyword id="KW-1185">Reference proteome</keyword>
<keyword id="KW-0811">Translocation</keyword>
<keyword id="KW-0813">Transport</keyword>
<keyword id="KW-0862">Zinc</keyword>
<organism>
    <name type="scientific">Candida albicans (strain SC5314 / ATCC MYA-2876)</name>
    <name type="common">Yeast</name>
    <dbReference type="NCBI Taxonomy" id="237561"/>
    <lineage>
        <taxon>Eukaryota</taxon>
        <taxon>Fungi</taxon>
        <taxon>Dikarya</taxon>
        <taxon>Ascomycota</taxon>
        <taxon>Saccharomycotina</taxon>
        <taxon>Pichiomycetes</taxon>
        <taxon>Debaryomycetaceae</taxon>
        <taxon>Candida/Lodderomyces clade</taxon>
        <taxon>Candida</taxon>
    </lineage>
</organism>
<dbReference type="EMBL" id="AP006852">
    <property type="protein sequence ID" value="BAE44866.1"/>
    <property type="molecule type" value="Genomic_DNA"/>
</dbReference>
<dbReference type="EMBL" id="CP017629">
    <property type="protein sequence ID" value="AOW30705.1"/>
    <property type="molecule type" value="Genomic_DNA"/>
</dbReference>
<dbReference type="RefSeq" id="XP_019331040.1">
    <property type="nucleotide sequence ID" value="XM_019475495.1"/>
</dbReference>
<dbReference type="SMR" id="Q59R24"/>
<dbReference type="FunCoup" id="Q59R24">
    <property type="interactions" value="948"/>
</dbReference>
<dbReference type="STRING" id="237561.Q59R24"/>
<dbReference type="EnsemblFungi" id="C7_03630C_A-T">
    <property type="protein sequence ID" value="C7_03630C_A-T-p1"/>
    <property type="gene ID" value="C7_03630C_A"/>
</dbReference>
<dbReference type="GeneID" id="3646243"/>
<dbReference type="KEGG" id="cal:CAALFM_C703630CA"/>
<dbReference type="CGD" id="CAL0000177007">
    <property type="gene designation" value="TIM9"/>
</dbReference>
<dbReference type="VEuPathDB" id="FungiDB:C7_03630C_A"/>
<dbReference type="eggNOG" id="KOG3479">
    <property type="taxonomic scope" value="Eukaryota"/>
</dbReference>
<dbReference type="HOGENOM" id="CLU_141397_3_0_1"/>
<dbReference type="InParanoid" id="Q59R24"/>
<dbReference type="OMA" id="QDFLRMY"/>
<dbReference type="OrthoDB" id="1551503at2759"/>
<dbReference type="Proteomes" id="UP000000559">
    <property type="component" value="Chromosome 7"/>
</dbReference>
<dbReference type="GO" id="GO:0042719">
    <property type="term" value="C:mitochondrial intermembrane space protein transporter complex"/>
    <property type="evidence" value="ECO:0007669"/>
    <property type="project" value="EnsemblFungi"/>
</dbReference>
<dbReference type="GO" id="GO:0042721">
    <property type="term" value="C:TIM22 mitochondrial import inner membrane insertion complex"/>
    <property type="evidence" value="ECO:0007669"/>
    <property type="project" value="EnsemblFungi"/>
</dbReference>
<dbReference type="GO" id="GO:0046872">
    <property type="term" value="F:metal ion binding"/>
    <property type="evidence" value="ECO:0007669"/>
    <property type="project" value="UniProtKB-KW"/>
</dbReference>
<dbReference type="GO" id="GO:0140318">
    <property type="term" value="F:protein transporter activity"/>
    <property type="evidence" value="ECO:0007669"/>
    <property type="project" value="EnsemblFungi"/>
</dbReference>
<dbReference type="GO" id="GO:0051082">
    <property type="term" value="F:unfolded protein binding"/>
    <property type="evidence" value="ECO:0007669"/>
    <property type="project" value="EnsemblFungi"/>
</dbReference>
<dbReference type="GO" id="GO:0045039">
    <property type="term" value="P:protein insertion into mitochondrial inner membrane"/>
    <property type="evidence" value="ECO:0007669"/>
    <property type="project" value="EnsemblFungi"/>
</dbReference>
<dbReference type="FunFam" id="1.10.287.810:FF:000008">
    <property type="entry name" value="Mitochondrial import inner membrane translocase subunit TIM9"/>
    <property type="match status" value="1"/>
</dbReference>
<dbReference type="Gene3D" id="1.10.287.810">
    <property type="entry name" value="Mitochondrial import inner membrane translocase subunit tim13 like domains"/>
    <property type="match status" value="1"/>
</dbReference>
<dbReference type="InterPro" id="IPR050673">
    <property type="entry name" value="Mito_inner_translocase_sub"/>
</dbReference>
<dbReference type="InterPro" id="IPR004217">
    <property type="entry name" value="Tim10-like"/>
</dbReference>
<dbReference type="InterPro" id="IPR035427">
    <property type="entry name" value="Tim10-like_dom_sf"/>
</dbReference>
<dbReference type="PANTHER" id="PTHR13172">
    <property type="entry name" value="MITOCHONDRIAL IMPORT INNER MEMBRANE TRANSLOCASE SUBUNIT TIM9B"/>
    <property type="match status" value="1"/>
</dbReference>
<dbReference type="Pfam" id="PF02953">
    <property type="entry name" value="zf-Tim10_DDP"/>
    <property type="match status" value="1"/>
</dbReference>
<dbReference type="SUPFAM" id="SSF144122">
    <property type="entry name" value="Tim10-like"/>
    <property type="match status" value="1"/>
</dbReference>
<accession>Q59R24</accession>
<accession>A0A1D8PRE3</accession>
<accession>Q3MNZ4</accession>
<feature type="chain" id="PRO_0000228041" description="Mitochondrial import inner membrane translocase subunit TIM9">
    <location>
        <begin position="1"/>
        <end position="87"/>
    </location>
</feature>
<feature type="short sequence motif" description="Twin CX3C motif">
    <location>
        <begin position="35"/>
        <end position="59"/>
    </location>
</feature>
<feature type="disulfide bond" evidence="1">
    <location>
        <begin position="35"/>
        <end position="59"/>
    </location>
</feature>
<feature type="disulfide bond" evidence="1">
    <location>
        <begin position="39"/>
        <end position="55"/>
    </location>
</feature>
<feature type="sequence conflict" description="In Ref. 1; BAE44866." evidence="2" ref="1">
    <original>NALLMQQGPK</original>
    <variation>KYVDLSRVTNGNMPLMIIIIYHQIILTNKLILL</variation>
    <location>
        <begin position="78"/>
        <end position="87"/>
    </location>
</feature>
<name>TIM9_CANAL</name>
<comment type="function">
    <text evidence="1">Mitochondrial intermembrane chaperone that participates in the import and insertion of multi-pass transmembrane proteins into the mitochondrial inner membrane. Also required for the transfer of beta-barrel precursors from the TOM complex to the sorting and assembly machinery (SAM complex) of the outer membrane. Acts as a chaperone-like protein that protects the hydrophobic precursors from aggregation and guide them through the mitochondrial intermembrane space (By similarity).</text>
</comment>
<comment type="subunit">
    <text evidence="1">Heterohexamer; composed of 3 copies of TIM9 and 3 copies of TIM10, named soluble 70 kDa complex. Associates with the TIM22 complex, whose core is composed of TIM22 and TIM54. Interacts with the transmembrane regions of multi-pass transmembrane proteins in transit (By similarity).</text>
</comment>
<comment type="subcellular location">
    <subcellularLocation>
        <location evidence="1">Mitochondrion inner membrane</location>
        <topology evidence="1">Peripheral membrane protein</topology>
        <orientation evidence="1">Intermembrane side</orientation>
    </subcellularLocation>
</comment>
<comment type="domain">
    <text evidence="1">The twin CX3C motif contains 4 conserved Cys residues that form 2 disulfide bonds in the mitochondrial intermembrane space. However, during the transit of TIM9 from cytoplasm into mitochondrion, the Cys residues probably coordinate zinc, thereby preventing folding and allowing its transfer across mitochondrial outer membrane (By similarity).</text>
</comment>
<comment type="similarity">
    <text evidence="2">Belongs to the small Tim family.</text>
</comment>
<gene>
    <name type="primary">TIM9</name>
    <name type="ordered locus">CAALFM_C703630CA</name>
    <name type="ORF">CaJ7.0415</name>
    <name type="ORF">CaO19.13988</name>
    <name type="ORF">CaO19.6696</name>
</gene>
<evidence type="ECO:0000250" key="1"/>
<evidence type="ECO:0000305" key="2"/>
<reference key="1">
    <citation type="journal article" date="2005" name="Genetics">
        <title>Sequence finishing and gene mapping for Candida albicans chromosome 7 and syntenic analysis against the Saccharomyces cerevisiae genome.</title>
        <authorList>
            <person name="Chibana H."/>
            <person name="Oka N."/>
            <person name="Nakayama H."/>
            <person name="Aoyama T."/>
            <person name="Magee B.B."/>
            <person name="Magee P.T."/>
            <person name="Mikami Y."/>
        </authorList>
    </citation>
    <scope>NUCLEOTIDE SEQUENCE [LARGE SCALE GENOMIC DNA]</scope>
    <source>
        <strain>SC5314 / ATCC MYA-2876</strain>
    </source>
</reference>
<reference key="2">
    <citation type="journal article" date="2004" name="Proc. Natl. Acad. Sci. U.S.A.">
        <title>The diploid genome sequence of Candida albicans.</title>
        <authorList>
            <person name="Jones T."/>
            <person name="Federspiel N.A."/>
            <person name="Chibana H."/>
            <person name="Dungan J."/>
            <person name="Kalman S."/>
            <person name="Magee B.B."/>
            <person name="Newport G."/>
            <person name="Thorstenson Y.R."/>
            <person name="Agabian N."/>
            <person name="Magee P.T."/>
            <person name="Davis R.W."/>
            <person name="Scherer S."/>
        </authorList>
    </citation>
    <scope>NUCLEOTIDE SEQUENCE [LARGE SCALE GENOMIC DNA]</scope>
    <source>
        <strain>SC5314 / ATCC MYA-2876</strain>
    </source>
</reference>
<reference key="3">
    <citation type="journal article" date="2007" name="Genome Biol.">
        <title>Assembly of the Candida albicans genome into sixteen supercontigs aligned on the eight chromosomes.</title>
        <authorList>
            <person name="van het Hoog M."/>
            <person name="Rast T.J."/>
            <person name="Martchenko M."/>
            <person name="Grindle S."/>
            <person name="Dignard D."/>
            <person name="Hogues H."/>
            <person name="Cuomo C."/>
            <person name="Berriman M."/>
            <person name="Scherer S."/>
            <person name="Magee B.B."/>
            <person name="Whiteway M."/>
            <person name="Chibana H."/>
            <person name="Nantel A."/>
            <person name="Magee P.T."/>
        </authorList>
    </citation>
    <scope>GENOME REANNOTATION</scope>
    <source>
        <strain>SC5314 / ATCC MYA-2876</strain>
    </source>
</reference>
<reference key="4">
    <citation type="journal article" date="2013" name="Genome Biol.">
        <title>Assembly of a phased diploid Candida albicans genome facilitates allele-specific measurements and provides a simple model for repeat and indel structure.</title>
        <authorList>
            <person name="Muzzey D."/>
            <person name="Schwartz K."/>
            <person name="Weissman J.S."/>
            <person name="Sherlock G."/>
        </authorList>
    </citation>
    <scope>NUCLEOTIDE SEQUENCE [LARGE SCALE GENOMIC DNA]</scope>
    <scope>GENOME REANNOTATION</scope>
    <source>
        <strain>SC5314 / ATCC MYA-2876</strain>
    </source>
</reference>
<sequence length="87" mass="10202">MDQLNVKEQQEFQQIVEQKQMKDFMNLYSNLVSRCFDDCVNDFTSNSLTSKETSCIAKCSEKFLKHSERVGQRFQEQNALLMQQGPK</sequence>
<protein>
    <recommendedName>
        <fullName>Mitochondrial import inner membrane translocase subunit TIM9</fullName>
    </recommendedName>
</protein>
<proteinExistence type="inferred from homology"/>